<feature type="chain" id="PRO_0000453892" description="Short-chain dehydrogenase/reductase olcF">
    <location>
        <begin position="1"/>
        <end position="258"/>
    </location>
</feature>
<feature type="active site" description="Proton donor" evidence="2">
    <location>
        <position position="138"/>
    </location>
</feature>
<feature type="active site" description="Proton acceptor" evidence="3">
    <location>
        <position position="152"/>
    </location>
</feature>
<feature type="active site" description="Lowers pKa of active site Tyr" evidence="2">
    <location>
        <position position="156"/>
    </location>
</feature>
<feature type="binding site" evidence="1">
    <location>
        <position position="12"/>
    </location>
    <ligand>
        <name>NADP(+)</name>
        <dbReference type="ChEBI" id="CHEBI:58349"/>
    </ligand>
</feature>
<feature type="binding site" evidence="1">
    <location>
        <position position="58"/>
    </location>
    <ligand>
        <name>NADP(+)</name>
        <dbReference type="ChEBI" id="CHEBI:58349"/>
    </ligand>
</feature>
<feature type="binding site" evidence="1">
    <location>
        <position position="120"/>
    </location>
    <ligand>
        <name>NADP(+)</name>
        <dbReference type="ChEBI" id="CHEBI:58349"/>
    </ligand>
</feature>
<feature type="binding site" evidence="2">
    <location>
        <position position="152"/>
    </location>
    <ligand>
        <name>NADP(+)</name>
        <dbReference type="ChEBI" id="CHEBI:58349"/>
    </ligand>
</feature>
<feature type="binding site" evidence="2">
    <location>
        <position position="156"/>
    </location>
    <ligand>
        <name>NADP(+)</name>
        <dbReference type="ChEBI" id="CHEBI:58349"/>
    </ligand>
</feature>
<feature type="binding site" evidence="2">
    <location>
        <position position="185"/>
    </location>
    <ligand>
        <name>NADP(+)</name>
        <dbReference type="ChEBI" id="CHEBI:58349"/>
    </ligand>
</feature>
<evidence type="ECO:0000250" key="1">
    <source>
        <dbReference type="UniProtKB" id="L0E2Z4"/>
    </source>
</evidence>
<evidence type="ECO:0000250" key="2">
    <source>
        <dbReference type="UniProtKB" id="O93868"/>
    </source>
</evidence>
<evidence type="ECO:0000255" key="3">
    <source>
        <dbReference type="PROSITE-ProRule" id="PRU10001"/>
    </source>
</evidence>
<evidence type="ECO:0000269" key="4">
    <source>
    </source>
</evidence>
<evidence type="ECO:0000303" key="5">
    <source>
    </source>
</evidence>
<evidence type="ECO:0000305" key="6"/>
<evidence type="ECO:0000305" key="7">
    <source>
    </source>
</evidence>
<proteinExistence type="inferred from homology"/>
<gene>
    <name evidence="5" type="primary">olcF</name>
</gene>
<dbReference type="EC" id="1.1.1.-" evidence="4"/>
<dbReference type="SMR" id="P9WEQ5"/>
<dbReference type="UniPathway" id="UPA00213"/>
<dbReference type="GO" id="GO:0016491">
    <property type="term" value="F:oxidoreductase activity"/>
    <property type="evidence" value="ECO:0007669"/>
    <property type="project" value="UniProtKB-KW"/>
</dbReference>
<dbReference type="GO" id="GO:0044550">
    <property type="term" value="P:secondary metabolite biosynthetic process"/>
    <property type="evidence" value="ECO:0007669"/>
    <property type="project" value="UniProtKB-ARBA"/>
</dbReference>
<dbReference type="GO" id="GO:0016114">
    <property type="term" value="P:terpenoid biosynthetic process"/>
    <property type="evidence" value="ECO:0007669"/>
    <property type="project" value="UniProtKB-UniPathway"/>
</dbReference>
<dbReference type="CDD" id="cd05233">
    <property type="entry name" value="SDR_c"/>
    <property type="match status" value="1"/>
</dbReference>
<dbReference type="FunFam" id="3.40.50.720:FF:000084">
    <property type="entry name" value="Short-chain dehydrogenase reductase"/>
    <property type="match status" value="1"/>
</dbReference>
<dbReference type="Gene3D" id="3.40.50.720">
    <property type="entry name" value="NAD(P)-binding Rossmann-like Domain"/>
    <property type="match status" value="1"/>
</dbReference>
<dbReference type="InterPro" id="IPR036291">
    <property type="entry name" value="NAD(P)-bd_dom_sf"/>
</dbReference>
<dbReference type="InterPro" id="IPR020904">
    <property type="entry name" value="Sc_DH/Rdtase_CS"/>
</dbReference>
<dbReference type="InterPro" id="IPR002347">
    <property type="entry name" value="SDR_fam"/>
</dbReference>
<dbReference type="InterPro" id="IPR051122">
    <property type="entry name" value="SDR_superfamily_enzyme"/>
</dbReference>
<dbReference type="PANTHER" id="PTHR43477">
    <property type="entry name" value="DIHYDROANTICAPSIN 7-DEHYDROGENASE"/>
    <property type="match status" value="1"/>
</dbReference>
<dbReference type="PANTHER" id="PTHR43477:SF1">
    <property type="entry name" value="DIHYDROANTICAPSIN 7-DEHYDROGENASE"/>
    <property type="match status" value="1"/>
</dbReference>
<dbReference type="Pfam" id="PF00106">
    <property type="entry name" value="adh_short"/>
    <property type="match status" value="1"/>
</dbReference>
<dbReference type="PRINTS" id="PR00081">
    <property type="entry name" value="GDHRDH"/>
</dbReference>
<dbReference type="PRINTS" id="PR00080">
    <property type="entry name" value="SDRFAMILY"/>
</dbReference>
<dbReference type="SUPFAM" id="SSF51735">
    <property type="entry name" value="NAD(P)-binding Rossmann-fold domains"/>
    <property type="match status" value="1"/>
</dbReference>
<dbReference type="PROSITE" id="PS00061">
    <property type="entry name" value="ADH_SHORT"/>
    <property type="match status" value="1"/>
</dbReference>
<comment type="function">
    <text evidence="4 7">Short-chain dehydrogenase/reductase; part of the gene cluster that mediates the biosynthesis of 15-deoxyoxalicine B (PubMed:30090271). The first step of the pathway is the synthesis of nicotinyl-CoA from nicotinic acid by the nicotinic acid-CoA ligase olcI (PubMed:30090271). Nicotinyl-CoA is then a substrate of polyketide synthase olcA to produce 4-hydroxy-6-(3-pyridinyl)-2H-pyran-2-one (HPPO) which is further prenylated by the polyprenyl transferase olcH to yield geranylgeranyl-HPPO (PubMed:30090271). Geranylgeranyl pyrophosphate is provided by the cluster-specific geranylgeranyl pyrophosphate synthase olcC (PubMed:30090271). The FAD-dependent monooxygenase olcE catalyzes the epoxidation of geranylgeranyl-HPPO and the terpene cyclase olcD catalyzes the cyclization of the terpenoid component, resulting in the formation of the tricyclic terpene moiety seen in predecaturin E (PubMed:30090271). The cytochrome P450 monooxygenase then catalyzes the allylic oxidation of predecaturin E, which is followed by spirocylization with concomitant loss of one molecule of water to form decaturin E (PubMed:30090271). Decaturin E is the substrate of the cytochrome P450 monooxygenase olcJ which hydroxylates it at the C-29 position to form decaturin F (PubMed:30090271). The short-chain dehydrogenase/reductase olcF may catalyze the oxidation of decaturin F to generate the 29-hydroxyl-27-one intermediate, and subsequent hemiacetal formation probably leads to the formation of decaturin C (Probable). The dioxygenase olcK may be a peroxisomal enzyme that catalyzes the hydroxylation of decaturin C into decaturin A once decaturin C is shuttled into the peroxisome by the MFS transporter olcL (Probable). Finally the cytochrome P450 monooxygenase olcB catalyzes the oxidative rearrangement to yield 15-deoxyoxalicine B (PubMed:30090271). In the absence of olcJ, decaturin E may be shunted to a pathway in which it is oxidized to a ketone, possibly by olcF, to form decaturin D, which undergoes further allylic oxidation to yield decaturin G (PubMed:30090271). Moreover, in the absence of oclK or oclL, oclB can convert decaturin C into 15-deoxyoxalicine A (PubMed:30090271).</text>
</comment>
<comment type="pathway">
    <text evidence="4">Secondary metabolite biosynthesis; terpenoid biosynthesis.</text>
</comment>
<comment type="disruption phenotype">
    <text evidence="4">Abolishes the production of 15-deoxyoxalicine B and accumulates decaturin F.</text>
</comment>
<comment type="miscellaneous">
    <text evidence="4">The 15-deoxyoxalicine B cluster is a rare cluster that contains its own geranylgeranyl pyrophosphate synthase (olcC), in contrast to other related clusters which rely on a FPP/GGPP synthase localized outside of the cluster.</text>
</comment>
<comment type="similarity">
    <text evidence="6">Belongs to the short-chain dehydrogenases/reductases (SDR) family.</text>
</comment>
<reference key="1">
    <citation type="journal article" date="2015" name="Chem. Sci.">
        <title>Genome mining and molecular characterization of the biosynthetic gene cluster of a diterpenic meroterpenoid, 15-deoxyoxalicine B, in Penicillium canescens.</title>
        <authorList>
            <person name="Yaegashi J."/>
            <person name="Romsdahl J."/>
            <person name="Chiang Y.M."/>
            <person name="Wang C.C.C."/>
        </authorList>
    </citation>
    <scope>FUNCTION</scope>
    <scope>DISRUPTION PHENOTYPE</scope>
    <scope>PATHWAY</scope>
</reference>
<reference key="2">
    <citation type="journal article" date="2016" name="Chem. Sci.">
        <title>Correction: Genome mining and molecular characterization of the biosynthetic gene cluster of a diterpenic meroterpenoid, 15-deoxyoxalicine B, in Penicillium canescens.</title>
        <authorList>
            <person name="Yaegashi J."/>
            <person name="Romsdahl J."/>
            <person name="Chiang Y.M."/>
            <person name="Wang C.C.C."/>
        </authorList>
    </citation>
    <scope>ERRATUM OF PUBMED:30090271</scope>
</reference>
<keyword id="KW-0521">NADP</keyword>
<keyword id="KW-0560">Oxidoreductase</keyword>
<organism>
    <name type="scientific">Penicillium canescens</name>
    <dbReference type="NCBI Taxonomy" id="5083"/>
    <lineage>
        <taxon>Eukaryota</taxon>
        <taxon>Fungi</taxon>
        <taxon>Dikarya</taxon>
        <taxon>Ascomycota</taxon>
        <taxon>Pezizomycotina</taxon>
        <taxon>Eurotiomycetes</taxon>
        <taxon>Eurotiomycetidae</taxon>
        <taxon>Eurotiales</taxon>
        <taxon>Aspergillaceae</taxon>
        <taxon>Penicillium</taxon>
    </lineage>
</organism>
<protein>
    <recommendedName>
        <fullName evidence="5">Short-chain dehydrogenase/reductase olcF</fullName>
        <ecNumber evidence="4">1.1.1.-</ecNumber>
    </recommendedName>
    <alternativeName>
        <fullName evidence="5">15-deoxyoxalicine B biosynthesis cluster protein F</fullName>
    </alternativeName>
</protein>
<sequence>MMGVLEDQVIIVTGAASGIGMATAIAALREGARVFGVDIAPQPATLKENNKFRYAQCDLAVESSIDSVVSNCLEVFEGRIDALFNIAGVMDHHGSVDTVTDSDWDRCIAINLTAPLKLMRAVIPTMRAHKRGNIINMSSRAGVSGAAAGVAYTASKHGLIGLSKNVAWRFKGDNIRCNVVCPGGVATGIISNMDPSQFDHEALDTIKPILGAVYSNRPEGYTQMLPEEVAETVIFLASDQSARINGAVLPVDDAWSTI</sequence>
<accession>P9WEQ5</accession>
<name>OLCF_PENCN</name>